<dbReference type="EMBL" id="KP268601">
    <property type="protein sequence ID" value="AJD85834.1"/>
    <property type="molecule type" value="mRNA"/>
</dbReference>
<dbReference type="GO" id="GO:0005576">
    <property type="term" value="C:extracellular region"/>
    <property type="evidence" value="ECO:0007669"/>
    <property type="project" value="UniProtKB-SubCell"/>
</dbReference>
<dbReference type="GO" id="GO:0005179">
    <property type="term" value="F:hormone activity"/>
    <property type="evidence" value="ECO:0007669"/>
    <property type="project" value="UniProtKB-KW"/>
</dbReference>
<dbReference type="GO" id="GO:0090729">
    <property type="term" value="F:toxin activity"/>
    <property type="evidence" value="ECO:0007669"/>
    <property type="project" value="UniProtKB-KW"/>
</dbReference>
<dbReference type="GO" id="GO:0006006">
    <property type="term" value="P:glucose metabolic process"/>
    <property type="evidence" value="ECO:0007669"/>
    <property type="project" value="UniProtKB-KW"/>
</dbReference>
<dbReference type="Gene3D" id="1.10.100.10">
    <property type="entry name" value="Insulin-like"/>
    <property type="match status" value="1"/>
</dbReference>
<dbReference type="InterPro" id="IPR016179">
    <property type="entry name" value="Insulin-like"/>
</dbReference>
<dbReference type="InterPro" id="IPR036438">
    <property type="entry name" value="Insulin-like_sf"/>
</dbReference>
<dbReference type="InterPro" id="IPR016724">
    <property type="entry name" value="Insulin-rel_pep"/>
</dbReference>
<dbReference type="InterPro" id="IPR022353">
    <property type="entry name" value="Insulin_CS"/>
</dbReference>
<dbReference type="Pfam" id="PF00049">
    <property type="entry name" value="Insulin"/>
    <property type="match status" value="1"/>
</dbReference>
<dbReference type="PIRSF" id="PIRSF018431">
    <property type="entry name" value="Molluscan_insulin_rel_peptide"/>
    <property type="match status" value="1"/>
</dbReference>
<dbReference type="SUPFAM" id="SSF56994">
    <property type="entry name" value="Insulin-like"/>
    <property type="match status" value="1"/>
</dbReference>
<dbReference type="PROSITE" id="PS00262">
    <property type="entry name" value="INSULIN"/>
    <property type="match status" value="1"/>
</dbReference>
<comment type="function">
    <text evidence="2">This venom insulin facilitates prey capture by rapidly inducing hypoglycemic shock. Intraperitoneal injection of this peptide into zebrafish lowers blood glucose with the same potency than human insulin. In vivo, when applied to water, this peptide reduces overall locomotor activity of zebrafish larvae, observed as a significant decrease in the percentage of time spent swimming and movement frequency.</text>
</comment>
<comment type="subunit">
    <text evidence="2">Heterodimer of A and B chains; disulfide-linked.</text>
</comment>
<comment type="subcellular location">
    <subcellularLocation>
        <location evidence="2">Secreted</location>
    </subcellularLocation>
</comment>
<comment type="tissue specificity">
    <text evidence="6">Expressed by the venom gland.</text>
</comment>
<comment type="similarity">
    <text>Belongs to the insulin family.</text>
</comment>
<organism>
    <name type="scientific">Conus textile</name>
    <name type="common">Cloth-of-gold cone</name>
    <dbReference type="NCBI Taxonomy" id="6494"/>
    <lineage>
        <taxon>Eukaryota</taxon>
        <taxon>Metazoa</taxon>
        <taxon>Spiralia</taxon>
        <taxon>Lophotrochozoa</taxon>
        <taxon>Mollusca</taxon>
        <taxon>Gastropoda</taxon>
        <taxon>Caenogastropoda</taxon>
        <taxon>Neogastropoda</taxon>
        <taxon>Conoidea</taxon>
        <taxon>Conidae</taxon>
        <taxon>Conus</taxon>
        <taxon>Cylinder</taxon>
    </lineage>
</organism>
<feature type="signal peptide" evidence="3">
    <location>
        <begin position="1"/>
        <end position="24"/>
    </location>
</feature>
<feature type="peptide" id="PRO_5002112928" description="Con-Ins T1 B chain" evidence="1">
    <location>
        <begin position="25"/>
        <end position="58"/>
    </location>
</feature>
<feature type="propeptide" id="PRO_0000439330" description="C peptide" evidence="1">
    <location>
        <begin position="59"/>
        <end position="92"/>
    </location>
</feature>
<feature type="peptide" id="PRO_0000439331" description="Con-Ins T1 A chain" evidence="1">
    <location>
        <begin position="93"/>
        <end position="124"/>
    </location>
</feature>
<feature type="modified residue" description="4-hydroxyproline; partial" evidence="2">
    <location>
        <position position="34"/>
    </location>
</feature>
<feature type="modified residue" description="4-carboxyglutamate; partial" evidence="2">
    <location>
        <position position="118"/>
    </location>
</feature>
<feature type="disulfide bond" evidence="5">
    <location>
        <begin position="29"/>
        <end position="107"/>
    </location>
</feature>
<feature type="disulfide bond" description="Interchain (between B and A chains)" evidence="2">
    <location>
        <begin position="41"/>
        <end position="110"/>
    </location>
</feature>
<feature type="disulfide bond" description="Interchain (between B and A chains)" evidence="2">
    <location>
        <begin position="53"/>
        <end position="123"/>
    </location>
</feature>
<feature type="disulfide bond" evidence="2">
    <location>
        <begin position="109"/>
        <end position="114"/>
    </location>
</feature>
<keyword id="KW-0119">Carbohydrate metabolism</keyword>
<keyword id="KW-0165">Cleavage on pair of basic residues</keyword>
<keyword id="KW-1015">Disulfide bond</keyword>
<keyword id="KW-0301">Gamma-carboxyglutamic acid</keyword>
<keyword id="KW-0313">Glucose metabolism</keyword>
<keyword id="KW-0372">Hormone</keyword>
<keyword id="KW-0379">Hydroxylation</keyword>
<keyword id="KW-0964">Secreted</keyword>
<keyword id="KW-0732">Signal</keyword>
<keyword id="KW-0800">Toxin</keyword>
<name>INS1_CONTE</name>
<reference key="1">
    <citation type="journal article" date="2015" name="Proc. Natl. Acad. Sci. U.S.A.">
        <title>Specialized insulin is used for chemical warfare by fish-hunting cone snails.</title>
        <authorList>
            <person name="Safavi-Hemami H."/>
            <person name="Gajewiak J."/>
            <person name="Karanth S."/>
            <person name="Robinson S.D."/>
            <person name="Ueberheide B."/>
            <person name="Douglass A.D."/>
            <person name="Schlegel A."/>
            <person name="Imperial J.S."/>
            <person name="Watkins M."/>
            <person name="Bandyopadhyay P.K."/>
            <person name="Yandell M."/>
            <person name="Li Q."/>
            <person name="Purcell A.W."/>
            <person name="Norton R.S."/>
            <person name="Ellgaard L."/>
            <person name="Olivera B.M."/>
        </authorList>
    </citation>
    <scope>NUCLEOTIDE SEQUENCE [MRNA]</scope>
    <source>
        <tissue>Venom gland</tissue>
    </source>
</reference>
<evidence type="ECO:0000250" key="1">
    <source>
        <dbReference type="UniProtKB" id="A0A0B5ABD9"/>
    </source>
</evidence>
<evidence type="ECO:0000250" key="2">
    <source>
        <dbReference type="UniProtKB" id="A0A0B5AC95"/>
    </source>
</evidence>
<evidence type="ECO:0000255" key="3"/>
<evidence type="ECO:0000303" key="4">
    <source>
    </source>
</evidence>
<evidence type="ECO:0000305" key="5"/>
<evidence type="ECO:0000305" key="6">
    <source>
    </source>
</evidence>
<evidence type="ECO:0000312" key="7">
    <source>
        <dbReference type="EMBL" id="AJD85834.1"/>
    </source>
</evidence>
<accession>A0A0B5A7N8</accession>
<sequence length="124" mass="13778">MTTSSYFLLVALGLLLYVFQSSFGGEHVCWLGDPNHPQGICGPQVADIVEIRCEEKEAEQGGANNARANTGRTSSLMKRRGFLSLLKKRGKRDEGSPLQRSGRGIVCECCKHHCTKEEFTEYCH</sequence>
<protein>
    <recommendedName>
        <fullName evidence="4">Con-Ins Tx1</fullName>
    </recommendedName>
    <alternativeName>
        <fullName evidence="7">Insulin 1</fullName>
    </alternativeName>
    <component>
        <recommendedName>
            <fullName evidence="4">Con-Ins T1 B chain</fullName>
        </recommendedName>
    </component>
    <component>
        <recommendedName>
            <fullName evidence="4">Con-Ins T1 A chain</fullName>
        </recommendedName>
    </component>
</protein>
<proteinExistence type="evidence at transcript level"/>